<dbReference type="EMBL" id="CP000606">
    <property type="protein sequence ID" value="ABO23896.1"/>
    <property type="molecule type" value="Genomic_DNA"/>
</dbReference>
<dbReference type="RefSeq" id="WP_011865828.1">
    <property type="nucleotide sequence ID" value="NC_009092.1"/>
</dbReference>
<dbReference type="SMR" id="A3QEJ8"/>
<dbReference type="STRING" id="323850.Shew_2030"/>
<dbReference type="KEGG" id="slo:Shew_2030"/>
<dbReference type="eggNOG" id="COG0291">
    <property type="taxonomic scope" value="Bacteria"/>
</dbReference>
<dbReference type="HOGENOM" id="CLU_169643_1_1_6"/>
<dbReference type="OrthoDB" id="47476at2"/>
<dbReference type="Proteomes" id="UP000001558">
    <property type="component" value="Chromosome"/>
</dbReference>
<dbReference type="GO" id="GO:0022625">
    <property type="term" value="C:cytosolic large ribosomal subunit"/>
    <property type="evidence" value="ECO:0007669"/>
    <property type="project" value="TreeGrafter"/>
</dbReference>
<dbReference type="GO" id="GO:0003735">
    <property type="term" value="F:structural constituent of ribosome"/>
    <property type="evidence" value="ECO:0007669"/>
    <property type="project" value="InterPro"/>
</dbReference>
<dbReference type="GO" id="GO:0006412">
    <property type="term" value="P:translation"/>
    <property type="evidence" value="ECO:0007669"/>
    <property type="project" value="UniProtKB-UniRule"/>
</dbReference>
<dbReference type="FunFam" id="4.10.410.60:FF:000001">
    <property type="entry name" value="50S ribosomal protein L35"/>
    <property type="match status" value="1"/>
</dbReference>
<dbReference type="Gene3D" id="4.10.410.60">
    <property type="match status" value="1"/>
</dbReference>
<dbReference type="HAMAP" id="MF_00514">
    <property type="entry name" value="Ribosomal_bL35"/>
    <property type="match status" value="1"/>
</dbReference>
<dbReference type="InterPro" id="IPR001706">
    <property type="entry name" value="Ribosomal_bL35"/>
</dbReference>
<dbReference type="InterPro" id="IPR021137">
    <property type="entry name" value="Ribosomal_bL35-like"/>
</dbReference>
<dbReference type="InterPro" id="IPR018265">
    <property type="entry name" value="Ribosomal_bL35_CS"/>
</dbReference>
<dbReference type="InterPro" id="IPR037229">
    <property type="entry name" value="Ribosomal_bL35_sf"/>
</dbReference>
<dbReference type="NCBIfam" id="TIGR00001">
    <property type="entry name" value="rpmI_bact"/>
    <property type="match status" value="1"/>
</dbReference>
<dbReference type="PANTHER" id="PTHR33343">
    <property type="entry name" value="54S RIBOSOMAL PROTEIN BL35M"/>
    <property type="match status" value="1"/>
</dbReference>
<dbReference type="PANTHER" id="PTHR33343:SF1">
    <property type="entry name" value="LARGE RIBOSOMAL SUBUNIT PROTEIN BL35M"/>
    <property type="match status" value="1"/>
</dbReference>
<dbReference type="Pfam" id="PF01632">
    <property type="entry name" value="Ribosomal_L35p"/>
    <property type="match status" value="1"/>
</dbReference>
<dbReference type="PRINTS" id="PR00064">
    <property type="entry name" value="RIBOSOMALL35"/>
</dbReference>
<dbReference type="SUPFAM" id="SSF143034">
    <property type="entry name" value="L35p-like"/>
    <property type="match status" value="1"/>
</dbReference>
<dbReference type="PROSITE" id="PS00936">
    <property type="entry name" value="RIBOSOMAL_L35"/>
    <property type="match status" value="1"/>
</dbReference>
<name>RL35_SHELP</name>
<sequence>MPKMKTDKGVQKRFKKTANGFKRKQAHLRHILTKKSTKRKRHLRAKCLVAKSDVPAIARQLPYA</sequence>
<gene>
    <name evidence="1" type="primary">rpmI</name>
    <name type="ordered locus">Shew_2030</name>
</gene>
<organism>
    <name type="scientific">Shewanella loihica (strain ATCC BAA-1088 / PV-4)</name>
    <dbReference type="NCBI Taxonomy" id="323850"/>
    <lineage>
        <taxon>Bacteria</taxon>
        <taxon>Pseudomonadati</taxon>
        <taxon>Pseudomonadota</taxon>
        <taxon>Gammaproteobacteria</taxon>
        <taxon>Alteromonadales</taxon>
        <taxon>Shewanellaceae</taxon>
        <taxon>Shewanella</taxon>
    </lineage>
</organism>
<feature type="chain" id="PRO_1000050764" description="Large ribosomal subunit protein bL35">
    <location>
        <begin position="1"/>
        <end position="64"/>
    </location>
</feature>
<keyword id="KW-1185">Reference proteome</keyword>
<keyword id="KW-0687">Ribonucleoprotein</keyword>
<keyword id="KW-0689">Ribosomal protein</keyword>
<protein>
    <recommendedName>
        <fullName evidence="1">Large ribosomal subunit protein bL35</fullName>
    </recommendedName>
    <alternativeName>
        <fullName evidence="2">50S ribosomal protein L35</fullName>
    </alternativeName>
</protein>
<accession>A3QEJ8</accession>
<evidence type="ECO:0000255" key="1">
    <source>
        <dbReference type="HAMAP-Rule" id="MF_00514"/>
    </source>
</evidence>
<evidence type="ECO:0000305" key="2"/>
<proteinExistence type="inferred from homology"/>
<reference key="1">
    <citation type="submission" date="2007-03" db="EMBL/GenBank/DDBJ databases">
        <title>Complete sequence of Shewanella loihica PV-4.</title>
        <authorList>
            <consortium name="US DOE Joint Genome Institute"/>
            <person name="Copeland A."/>
            <person name="Lucas S."/>
            <person name="Lapidus A."/>
            <person name="Barry K."/>
            <person name="Detter J.C."/>
            <person name="Glavina del Rio T."/>
            <person name="Hammon N."/>
            <person name="Israni S."/>
            <person name="Dalin E."/>
            <person name="Tice H."/>
            <person name="Pitluck S."/>
            <person name="Chain P."/>
            <person name="Malfatti S."/>
            <person name="Shin M."/>
            <person name="Vergez L."/>
            <person name="Schmutz J."/>
            <person name="Larimer F."/>
            <person name="Land M."/>
            <person name="Hauser L."/>
            <person name="Kyrpides N."/>
            <person name="Mikhailova N."/>
            <person name="Romine M.F."/>
            <person name="Serres G."/>
            <person name="Fredrickson J."/>
            <person name="Tiedje J."/>
            <person name="Richardson P."/>
        </authorList>
    </citation>
    <scope>NUCLEOTIDE SEQUENCE [LARGE SCALE GENOMIC DNA]</scope>
    <source>
        <strain>ATCC BAA-1088 / PV-4</strain>
    </source>
</reference>
<comment type="similarity">
    <text evidence="1">Belongs to the bacterial ribosomal protein bL35 family.</text>
</comment>